<dbReference type="EMBL" id="CP000241">
    <property type="protein sequence ID" value="ABF84403.1"/>
    <property type="molecule type" value="Genomic_DNA"/>
</dbReference>
<dbReference type="RefSeq" id="WP_000051514.1">
    <property type="nucleotide sequence ID" value="NC_008086.1"/>
</dbReference>
<dbReference type="SMR" id="Q1CUG9"/>
<dbReference type="KEGG" id="hpa:HPAG1_0336"/>
<dbReference type="HOGENOM" id="CLU_137929_2_1_7"/>
<dbReference type="GO" id="GO:0051301">
    <property type="term" value="P:cell division"/>
    <property type="evidence" value="ECO:0007669"/>
    <property type="project" value="UniProtKB-KW"/>
</dbReference>
<dbReference type="GO" id="GO:0032955">
    <property type="term" value="P:regulation of division septum assembly"/>
    <property type="evidence" value="ECO:0007669"/>
    <property type="project" value="InterPro"/>
</dbReference>
<dbReference type="Gene3D" id="3.30.1070.10">
    <property type="entry name" value="Cell division topological specificity factor MinE"/>
    <property type="match status" value="1"/>
</dbReference>
<dbReference type="HAMAP" id="MF_00262">
    <property type="entry name" value="MinE"/>
    <property type="match status" value="1"/>
</dbReference>
<dbReference type="InterPro" id="IPR005527">
    <property type="entry name" value="MinE"/>
</dbReference>
<dbReference type="InterPro" id="IPR036707">
    <property type="entry name" value="MinE_sf"/>
</dbReference>
<dbReference type="NCBIfam" id="TIGR01215">
    <property type="entry name" value="minE"/>
    <property type="match status" value="1"/>
</dbReference>
<dbReference type="NCBIfam" id="NF001422">
    <property type="entry name" value="PRK00296.1"/>
    <property type="match status" value="1"/>
</dbReference>
<dbReference type="Pfam" id="PF03776">
    <property type="entry name" value="MinE"/>
    <property type="match status" value="1"/>
</dbReference>
<dbReference type="SUPFAM" id="SSF55229">
    <property type="entry name" value="Cell division protein MinE topological specificity domain"/>
    <property type="match status" value="1"/>
</dbReference>
<feature type="chain" id="PRO_0000298128" description="Cell division topological specificity factor">
    <location>
        <begin position="1"/>
        <end position="77"/>
    </location>
</feature>
<comment type="function">
    <text evidence="1">Prevents the cell division inhibition by proteins MinC and MinD at internal division sites while permitting inhibition at polar sites. This ensures cell division at the proper site by restricting the formation of a division septum at the midpoint of the long axis of the cell.</text>
</comment>
<comment type="similarity">
    <text evidence="1">Belongs to the MinE family.</text>
</comment>
<reference key="1">
    <citation type="journal article" date="2006" name="Proc. Natl. Acad. Sci. U.S.A.">
        <title>The complete genome sequence of a chronic atrophic gastritis Helicobacter pylori strain: evolution during disease progression.</title>
        <authorList>
            <person name="Oh J.D."/>
            <person name="Kling-Baeckhed H."/>
            <person name="Giannakis M."/>
            <person name="Xu J."/>
            <person name="Fulton R.S."/>
            <person name="Fulton L.A."/>
            <person name="Cordum H.S."/>
            <person name="Wang C."/>
            <person name="Elliott G."/>
            <person name="Edwards J."/>
            <person name="Mardis E.R."/>
            <person name="Engstrand L.G."/>
            <person name="Gordon J.I."/>
        </authorList>
    </citation>
    <scope>NUCLEOTIDE SEQUENCE [LARGE SCALE GENOMIC DNA]</scope>
    <source>
        <strain>HPAG1</strain>
    </source>
</reference>
<organism>
    <name type="scientific">Helicobacter pylori (strain HPAG1)</name>
    <dbReference type="NCBI Taxonomy" id="357544"/>
    <lineage>
        <taxon>Bacteria</taxon>
        <taxon>Pseudomonadati</taxon>
        <taxon>Campylobacterota</taxon>
        <taxon>Epsilonproteobacteria</taxon>
        <taxon>Campylobacterales</taxon>
        <taxon>Helicobacteraceae</taxon>
        <taxon>Helicobacter</taxon>
    </lineage>
</organism>
<accession>Q1CUG9</accession>
<evidence type="ECO:0000255" key="1">
    <source>
        <dbReference type="HAMAP-Rule" id="MF_00262"/>
    </source>
</evidence>
<sequence>MSLFGFFKNKGSATTATDRLKLILAKERTLNLPYMEEMRKEIIAVIQKYTKSSDIHFKTLDSNQSVETIEVEIILPK</sequence>
<name>MINE_HELPH</name>
<proteinExistence type="inferred from homology"/>
<gene>
    <name evidence="1" type="primary">minE</name>
    <name type="ordered locus">HPAG1_0336</name>
</gene>
<protein>
    <recommendedName>
        <fullName evidence="1">Cell division topological specificity factor</fullName>
    </recommendedName>
</protein>
<keyword id="KW-0131">Cell cycle</keyword>
<keyword id="KW-0132">Cell division</keyword>